<organism>
    <name type="scientific">Methanopyrus kandleri (strain AV19 / DSM 6324 / JCM 9639 / NBRC 100938)</name>
    <dbReference type="NCBI Taxonomy" id="190192"/>
    <lineage>
        <taxon>Archaea</taxon>
        <taxon>Methanobacteriati</taxon>
        <taxon>Methanobacteriota</taxon>
        <taxon>Methanomada group</taxon>
        <taxon>Methanopyri</taxon>
        <taxon>Methanopyrales</taxon>
        <taxon>Methanopyraceae</taxon>
        <taxon>Methanopyrus</taxon>
    </lineage>
</organism>
<gene>
    <name type="ordered locus">MK0488</name>
</gene>
<accession>Q8TY18</accession>
<feature type="chain" id="PRO_0000142378" description="Protein MK0488">
    <location>
        <begin position="1"/>
        <end position="207"/>
    </location>
</feature>
<feature type="domain" description="AMMECR1" evidence="1">
    <location>
        <begin position="8"/>
        <end position="200"/>
    </location>
</feature>
<proteinExistence type="inferred from homology"/>
<keyword id="KW-1185">Reference proteome</keyword>
<reference key="1">
    <citation type="journal article" date="2002" name="Proc. Natl. Acad. Sci. U.S.A.">
        <title>The complete genome of hyperthermophile Methanopyrus kandleri AV19 and monophyly of archaeal methanogens.</title>
        <authorList>
            <person name="Slesarev A.I."/>
            <person name="Mezhevaya K.V."/>
            <person name="Makarova K.S."/>
            <person name="Polushin N.N."/>
            <person name="Shcherbinina O.V."/>
            <person name="Shakhova V.V."/>
            <person name="Belova G.I."/>
            <person name="Aravind L."/>
            <person name="Natale D.A."/>
            <person name="Rogozin I.B."/>
            <person name="Tatusov R.L."/>
            <person name="Wolf Y.I."/>
            <person name="Stetter K.O."/>
            <person name="Malykh A.G."/>
            <person name="Koonin E.V."/>
            <person name="Kozyavkin S.A."/>
        </authorList>
    </citation>
    <scope>NUCLEOTIDE SEQUENCE [LARGE SCALE GENOMIC DNA]</scope>
    <source>
        <strain>AV19 / DSM 6324 / JCM 9639 / NBRC 100938</strain>
    </source>
</reference>
<sequence length="207" mass="23458">MGEKLTLEEGEFLVRLARKAIVHYLESGKKIEEKPPTQRLAEKRGVFVTLKKYPDDELRGCIGFPEPIKPLVEATVEAAISAATGDPRFPPMRDPSEMEEIKIEVSVLTPPKKLEVDNPKEYVEKIEIGRHGIIVRRGARSGLLLPQVPVEEGWDEIEFLSHACLKAGLPPDWWCSPDCEIYVFEAQVFEEEEPEGPVRERDLAEEQ</sequence>
<protein>
    <recommendedName>
        <fullName evidence="1">Protein MK0488</fullName>
    </recommendedName>
</protein>
<dbReference type="EMBL" id="AE009439">
    <property type="protein sequence ID" value="AAM01703.1"/>
    <property type="molecule type" value="Genomic_DNA"/>
</dbReference>
<dbReference type="RefSeq" id="WP_011018858.1">
    <property type="nucleotide sequence ID" value="NC_003551.1"/>
</dbReference>
<dbReference type="SMR" id="Q8TY18"/>
<dbReference type="FunCoup" id="Q8TY18">
    <property type="interactions" value="72"/>
</dbReference>
<dbReference type="STRING" id="190192.MK0488"/>
<dbReference type="PaxDb" id="190192-MK0488"/>
<dbReference type="EnsemblBacteria" id="AAM01703">
    <property type="protein sequence ID" value="AAM01703"/>
    <property type="gene ID" value="MK0488"/>
</dbReference>
<dbReference type="GeneID" id="1477791"/>
<dbReference type="KEGG" id="mka:MK0488"/>
<dbReference type="PATRIC" id="fig|190192.8.peg.518"/>
<dbReference type="HOGENOM" id="CLU_095686_1_1_2"/>
<dbReference type="InParanoid" id="Q8TY18"/>
<dbReference type="OrthoDB" id="25187at2157"/>
<dbReference type="Proteomes" id="UP000001826">
    <property type="component" value="Chromosome"/>
</dbReference>
<dbReference type="Gene3D" id="3.30.700.20">
    <property type="entry name" value="Hypothetical protein ph0010, domain 1"/>
    <property type="match status" value="1"/>
</dbReference>
<dbReference type="Gene3D" id="3.30.1490.150">
    <property type="entry name" value="Hypothetical protein ph0010, domain 2"/>
    <property type="match status" value="1"/>
</dbReference>
<dbReference type="HAMAP" id="MF_00645">
    <property type="entry name" value="AMMECR1"/>
    <property type="match status" value="1"/>
</dbReference>
<dbReference type="InterPro" id="IPR023473">
    <property type="entry name" value="AMMECR1"/>
</dbReference>
<dbReference type="InterPro" id="IPR036071">
    <property type="entry name" value="AMMECR1_dom_sf"/>
</dbReference>
<dbReference type="InterPro" id="IPR002733">
    <property type="entry name" value="AMMECR1_domain"/>
</dbReference>
<dbReference type="InterPro" id="IPR027485">
    <property type="entry name" value="AMMECR1_N"/>
</dbReference>
<dbReference type="InterPro" id="IPR027623">
    <property type="entry name" value="AmmeMemoSam_A"/>
</dbReference>
<dbReference type="InterPro" id="IPR023472">
    <property type="entry name" value="Uncharacterised_MJ0810"/>
</dbReference>
<dbReference type="NCBIfam" id="TIGR04335">
    <property type="entry name" value="AmmeMemoSam_A"/>
    <property type="match status" value="1"/>
</dbReference>
<dbReference type="NCBIfam" id="NF002000">
    <property type="entry name" value="PRK00801.1"/>
    <property type="match status" value="1"/>
</dbReference>
<dbReference type="NCBIfam" id="TIGR00296">
    <property type="entry name" value="TIGR00296 family protein"/>
    <property type="match status" value="1"/>
</dbReference>
<dbReference type="PANTHER" id="PTHR13016:SF0">
    <property type="entry name" value="AMME SYNDROME CANDIDATE GENE 1 PROTEIN"/>
    <property type="match status" value="1"/>
</dbReference>
<dbReference type="PANTHER" id="PTHR13016">
    <property type="entry name" value="AMMECR1 HOMOLOG"/>
    <property type="match status" value="1"/>
</dbReference>
<dbReference type="Pfam" id="PF01871">
    <property type="entry name" value="AMMECR1"/>
    <property type="match status" value="1"/>
</dbReference>
<dbReference type="SUPFAM" id="SSF143447">
    <property type="entry name" value="AMMECR1-like"/>
    <property type="match status" value="1"/>
</dbReference>
<dbReference type="PROSITE" id="PS51112">
    <property type="entry name" value="AMMECR1"/>
    <property type="match status" value="1"/>
</dbReference>
<evidence type="ECO:0000255" key="1">
    <source>
        <dbReference type="HAMAP-Rule" id="MF_00645"/>
    </source>
</evidence>
<name>Y488_METKA</name>